<accession>A8MG66</accession>
<name>YBEY_ALKOO</name>
<gene>
    <name evidence="1" type="primary">ybeY</name>
    <name type="ordered locus">Clos_1248</name>
</gene>
<comment type="function">
    <text evidence="1">Single strand-specific metallo-endoribonuclease involved in late-stage 70S ribosome quality control and in maturation of the 3' terminus of the 16S rRNA.</text>
</comment>
<comment type="cofactor">
    <cofactor evidence="1">
        <name>Zn(2+)</name>
        <dbReference type="ChEBI" id="CHEBI:29105"/>
    </cofactor>
    <text evidence="1">Binds 1 zinc ion.</text>
</comment>
<comment type="subcellular location">
    <subcellularLocation>
        <location evidence="1">Cytoplasm</location>
    </subcellularLocation>
</comment>
<comment type="similarity">
    <text evidence="1">Belongs to the endoribonuclease YbeY family.</text>
</comment>
<keyword id="KW-0963">Cytoplasm</keyword>
<keyword id="KW-0255">Endonuclease</keyword>
<keyword id="KW-0378">Hydrolase</keyword>
<keyword id="KW-0479">Metal-binding</keyword>
<keyword id="KW-0540">Nuclease</keyword>
<keyword id="KW-1185">Reference proteome</keyword>
<keyword id="KW-0690">Ribosome biogenesis</keyword>
<keyword id="KW-0698">rRNA processing</keyword>
<keyword id="KW-0862">Zinc</keyword>
<proteinExistence type="inferred from homology"/>
<protein>
    <recommendedName>
        <fullName evidence="1">Endoribonuclease YbeY</fullName>
        <ecNumber evidence="1">3.1.-.-</ecNumber>
    </recommendedName>
</protein>
<dbReference type="EC" id="3.1.-.-" evidence="1"/>
<dbReference type="EMBL" id="CP000853">
    <property type="protein sequence ID" value="ABW18794.1"/>
    <property type="molecule type" value="Genomic_DNA"/>
</dbReference>
<dbReference type="RefSeq" id="WP_012159106.1">
    <property type="nucleotide sequence ID" value="NC_009922.1"/>
</dbReference>
<dbReference type="SMR" id="A8MG66"/>
<dbReference type="STRING" id="350688.Clos_1248"/>
<dbReference type="KEGG" id="aoe:Clos_1248"/>
<dbReference type="eggNOG" id="COG0319">
    <property type="taxonomic scope" value="Bacteria"/>
</dbReference>
<dbReference type="HOGENOM" id="CLU_106710_3_0_9"/>
<dbReference type="OrthoDB" id="9807740at2"/>
<dbReference type="Proteomes" id="UP000000269">
    <property type="component" value="Chromosome"/>
</dbReference>
<dbReference type="GO" id="GO:0005737">
    <property type="term" value="C:cytoplasm"/>
    <property type="evidence" value="ECO:0007669"/>
    <property type="project" value="UniProtKB-SubCell"/>
</dbReference>
<dbReference type="GO" id="GO:0004222">
    <property type="term" value="F:metalloendopeptidase activity"/>
    <property type="evidence" value="ECO:0007669"/>
    <property type="project" value="InterPro"/>
</dbReference>
<dbReference type="GO" id="GO:0004521">
    <property type="term" value="F:RNA endonuclease activity"/>
    <property type="evidence" value="ECO:0007669"/>
    <property type="project" value="UniProtKB-UniRule"/>
</dbReference>
<dbReference type="GO" id="GO:0008270">
    <property type="term" value="F:zinc ion binding"/>
    <property type="evidence" value="ECO:0007669"/>
    <property type="project" value="UniProtKB-UniRule"/>
</dbReference>
<dbReference type="GO" id="GO:0006364">
    <property type="term" value="P:rRNA processing"/>
    <property type="evidence" value="ECO:0007669"/>
    <property type="project" value="UniProtKB-UniRule"/>
</dbReference>
<dbReference type="Gene3D" id="3.40.390.30">
    <property type="entry name" value="Metalloproteases ('zincins'), catalytic domain"/>
    <property type="match status" value="1"/>
</dbReference>
<dbReference type="HAMAP" id="MF_00009">
    <property type="entry name" value="Endoribonucl_YbeY"/>
    <property type="match status" value="1"/>
</dbReference>
<dbReference type="InterPro" id="IPR023091">
    <property type="entry name" value="MetalPrtase_cat_dom_sf_prd"/>
</dbReference>
<dbReference type="InterPro" id="IPR002036">
    <property type="entry name" value="YbeY"/>
</dbReference>
<dbReference type="NCBIfam" id="TIGR00043">
    <property type="entry name" value="rRNA maturation RNase YbeY"/>
    <property type="match status" value="1"/>
</dbReference>
<dbReference type="PANTHER" id="PTHR46986">
    <property type="entry name" value="ENDORIBONUCLEASE YBEY, CHLOROPLASTIC"/>
    <property type="match status" value="1"/>
</dbReference>
<dbReference type="PANTHER" id="PTHR46986:SF1">
    <property type="entry name" value="ENDORIBONUCLEASE YBEY, CHLOROPLASTIC"/>
    <property type="match status" value="1"/>
</dbReference>
<dbReference type="Pfam" id="PF02130">
    <property type="entry name" value="YbeY"/>
    <property type="match status" value="1"/>
</dbReference>
<dbReference type="SUPFAM" id="SSF55486">
    <property type="entry name" value="Metalloproteases ('zincins'), catalytic domain"/>
    <property type="match status" value="1"/>
</dbReference>
<evidence type="ECO:0000255" key="1">
    <source>
        <dbReference type="HAMAP-Rule" id="MF_00009"/>
    </source>
</evidence>
<organism>
    <name type="scientific">Alkaliphilus oremlandii (strain OhILAs)</name>
    <name type="common">Clostridium oremlandii (strain OhILAs)</name>
    <dbReference type="NCBI Taxonomy" id="350688"/>
    <lineage>
        <taxon>Bacteria</taxon>
        <taxon>Bacillati</taxon>
        <taxon>Bacillota</taxon>
        <taxon>Clostridia</taxon>
        <taxon>Peptostreptococcales</taxon>
        <taxon>Natronincolaceae</taxon>
        <taxon>Alkaliphilus</taxon>
    </lineage>
</organism>
<sequence length="151" mass="17539">MELLIDNRQDRYEITDALIELINKAVEACLIYEGWEIDYEVSLSFVDNQEIQALNHTYRGKDYATDVLSFPLIEENQGLDLEEKLLGDIVISVEKAAEQAKEYNHSFEREMGFLVVHSMFHLMGYDHDHDEATADMRKREEAVLTAINLLR</sequence>
<reference key="1">
    <citation type="submission" date="2007-10" db="EMBL/GenBank/DDBJ databases">
        <title>Complete genome of Alkaliphilus oremlandii OhILAs.</title>
        <authorList>
            <person name="Copeland A."/>
            <person name="Lucas S."/>
            <person name="Lapidus A."/>
            <person name="Barry K."/>
            <person name="Detter J.C."/>
            <person name="Glavina del Rio T."/>
            <person name="Hammon N."/>
            <person name="Israni S."/>
            <person name="Dalin E."/>
            <person name="Tice H."/>
            <person name="Pitluck S."/>
            <person name="Chain P."/>
            <person name="Malfatti S."/>
            <person name="Shin M."/>
            <person name="Vergez L."/>
            <person name="Schmutz J."/>
            <person name="Larimer F."/>
            <person name="Land M."/>
            <person name="Hauser L."/>
            <person name="Kyrpides N."/>
            <person name="Mikhailova N."/>
            <person name="Stolz J.F."/>
            <person name="Dawson A."/>
            <person name="Fisher E."/>
            <person name="Crable B."/>
            <person name="Perera E."/>
            <person name="Lisak J."/>
            <person name="Ranganathan M."/>
            <person name="Basu P."/>
            <person name="Richardson P."/>
        </authorList>
    </citation>
    <scope>NUCLEOTIDE SEQUENCE [LARGE SCALE GENOMIC DNA]</scope>
    <source>
        <strain>OhILAs</strain>
    </source>
</reference>
<feature type="chain" id="PRO_1000057064" description="Endoribonuclease YbeY">
    <location>
        <begin position="1"/>
        <end position="151"/>
    </location>
</feature>
<feature type="binding site" evidence="1">
    <location>
        <position position="117"/>
    </location>
    <ligand>
        <name>Zn(2+)</name>
        <dbReference type="ChEBI" id="CHEBI:29105"/>
        <note>catalytic</note>
    </ligand>
</feature>
<feature type="binding site" evidence="1">
    <location>
        <position position="121"/>
    </location>
    <ligand>
        <name>Zn(2+)</name>
        <dbReference type="ChEBI" id="CHEBI:29105"/>
        <note>catalytic</note>
    </ligand>
</feature>
<feature type="binding site" evidence="1">
    <location>
        <position position="127"/>
    </location>
    <ligand>
        <name>Zn(2+)</name>
        <dbReference type="ChEBI" id="CHEBI:29105"/>
        <note>catalytic</note>
    </ligand>
</feature>